<evidence type="ECO:0000255" key="1">
    <source>
        <dbReference type="HAMAP-Rule" id="MF_00706"/>
    </source>
</evidence>
<organism>
    <name type="scientific">Escherichia coli (strain K12 / MC4100 / BW2952)</name>
    <dbReference type="NCBI Taxonomy" id="595496"/>
    <lineage>
        <taxon>Bacteria</taxon>
        <taxon>Pseudomonadati</taxon>
        <taxon>Pseudomonadota</taxon>
        <taxon>Gammaproteobacteria</taxon>
        <taxon>Enterobacterales</taxon>
        <taxon>Enterobacteriaceae</taxon>
        <taxon>Escherichia</taxon>
    </lineage>
</organism>
<feature type="signal peptide" evidence="1">
    <location>
        <begin position="1"/>
        <end position="20"/>
    </location>
</feature>
<feature type="chain" id="PRO_1000212646" description="Ecotin">
    <location>
        <begin position="21"/>
        <end position="162"/>
    </location>
</feature>
<feature type="site" description="Reactive bond" evidence="1">
    <location>
        <begin position="104"/>
        <end position="105"/>
    </location>
</feature>
<feature type="disulfide bond" evidence="1">
    <location>
        <begin position="70"/>
        <end position="107"/>
    </location>
</feature>
<gene>
    <name evidence="1" type="primary">eco</name>
    <name type="ordered locus">BWG_1983</name>
</gene>
<comment type="function">
    <text evidence="1">General inhibitor of pancreatic serine proteases: inhibits chymotrypsin, trypsin, elastases, factor X, kallikrein as well as a variety of other proteases.</text>
</comment>
<comment type="subunit">
    <text evidence="1">Homodimer.</text>
</comment>
<comment type="subcellular location">
    <subcellularLocation>
        <location evidence="1">Periplasm</location>
    </subcellularLocation>
</comment>
<comment type="similarity">
    <text evidence="1">Belongs to the protease inhibitor I11 (ecotin) family.</text>
</comment>
<dbReference type="EMBL" id="CP001396">
    <property type="protein sequence ID" value="ACR63022.1"/>
    <property type="molecule type" value="Genomic_DNA"/>
</dbReference>
<dbReference type="SMR" id="C4ZU52"/>
<dbReference type="MEROPS" id="I11.001"/>
<dbReference type="KEGG" id="ebw:BWG_1983"/>
<dbReference type="HOGENOM" id="CLU_111565_0_0_6"/>
<dbReference type="GO" id="GO:0042597">
    <property type="term" value="C:periplasmic space"/>
    <property type="evidence" value="ECO:0007669"/>
    <property type="project" value="UniProtKB-SubCell"/>
</dbReference>
<dbReference type="GO" id="GO:0004867">
    <property type="term" value="F:serine-type endopeptidase inhibitor activity"/>
    <property type="evidence" value="ECO:0007669"/>
    <property type="project" value="UniProtKB-UniRule"/>
</dbReference>
<dbReference type="CDD" id="cd00242">
    <property type="entry name" value="Ecotin"/>
    <property type="match status" value="1"/>
</dbReference>
<dbReference type="FunFam" id="2.60.40.550:FF:000001">
    <property type="entry name" value="Ecotin"/>
    <property type="match status" value="1"/>
</dbReference>
<dbReference type="FunFam" id="4.10.1230.10:FF:000001">
    <property type="entry name" value="Ecotin"/>
    <property type="match status" value="1"/>
</dbReference>
<dbReference type="Gene3D" id="2.60.40.550">
    <property type="entry name" value="Ecotin"/>
    <property type="match status" value="1"/>
</dbReference>
<dbReference type="Gene3D" id="4.10.1230.10">
    <property type="entry name" value="Ecotin, trypsin inhibitor"/>
    <property type="match status" value="1"/>
</dbReference>
<dbReference type="HAMAP" id="MF_00706">
    <property type="entry name" value="Ecotin"/>
    <property type="match status" value="1"/>
</dbReference>
<dbReference type="InterPro" id="IPR027438">
    <property type="entry name" value="Ecotin_C"/>
</dbReference>
<dbReference type="InterPro" id="IPR036198">
    <property type="entry name" value="Ecotin_sf"/>
</dbReference>
<dbReference type="InterPro" id="IPR005658">
    <property type="entry name" value="Prot_inh_ecotin"/>
</dbReference>
<dbReference type="InterPro" id="IPR023084">
    <property type="entry name" value="Prot_inh_ecotin_gammaproteobac"/>
</dbReference>
<dbReference type="NCBIfam" id="NF002987">
    <property type="entry name" value="PRK03719.1"/>
    <property type="match status" value="1"/>
</dbReference>
<dbReference type="PANTHER" id="PTHR35890">
    <property type="match status" value="1"/>
</dbReference>
<dbReference type="PANTHER" id="PTHR35890:SF3">
    <property type="entry name" value="ECOTIN"/>
    <property type="match status" value="1"/>
</dbReference>
<dbReference type="Pfam" id="PF03974">
    <property type="entry name" value="Ecotin"/>
    <property type="match status" value="1"/>
</dbReference>
<dbReference type="PIRSF" id="PIRSF006865">
    <property type="entry name" value="Prot_inh_ecotin"/>
    <property type="match status" value="1"/>
</dbReference>
<dbReference type="SUPFAM" id="SSF49772">
    <property type="entry name" value="Ecotin, trypsin inhibitor"/>
    <property type="match status" value="1"/>
</dbReference>
<protein>
    <recommendedName>
        <fullName evidence="1">Ecotin</fullName>
    </recommendedName>
</protein>
<sequence>MKTILPAVLFAAFATTSAWAAESVQPLEKIAPYPQAEKGMKRQVIQLTPQEDESTLKVELLIGQTLEVDCNLHRLGGKLENKTLEGWGYDYYVFDKVSSPVSTMMACPDGKKEKKFVTAYLGDAGMLRYNSKLPIVVYTPDNVDVKYRVWKAEEKIDNAVVR</sequence>
<name>ECOT_ECOBW</name>
<reference key="1">
    <citation type="journal article" date="2009" name="J. Bacteriol.">
        <title>Genomic sequencing reveals regulatory mutations and recombinational events in the widely used MC4100 lineage of Escherichia coli K-12.</title>
        <authorList>
            <person name="Ferenci T."/>
            <person name="Zhou Z."/>
            <person name="Betteridge T."/>
            <person name="Ren Y."/>
            <person name="Liu Y."/>
            <person name="Feng L."/>
            <person name="Reeves P.R."/>
            <person name="Wang L."/>
        </authorList>
    </citation>
    <scope>NUCLEOTIDE SEQUENCE [LARGE SCALE GENOMIC DNA]</scope>
    <source>
        <strain>K12 / MC4100 / BW2952</strain>
    </source>
</reference>
<proteinExistence type="inferred from homology"/>
<accession>C4ZU52</accession>
<keyword id="KW-1015">Disulfide bond</keyword>
<keyword id="KW-0574">Periplasm</keyword>
<keyword id="KW-0646">Protease inhibitor</keyword>
<keyword id="KW-0722">Serine protease inhibitor</keyword>
<keyword id="KW-0732">Signal</keyword>